<accession>B3H1E5</accession>
<organism>
    <name type="scientific">Actinobacillus pleuropneumoniae serotype 7 (strain AP76)</name>
    <dbReference type="NCBI Taxonomy" id="537457"/>
    <lineage>
        <taxon>Bacteria</taxon>
        <taxon>Pseudomonadati</taxon>
        <taxon>Pseudomonadota</taxon>
        <taxon>Gammaproteobacteria</taxon>
        <taxon>Pasteurellales</taxon>
        <taxon>Pasteurellaceae</taxon>
        <taxon>Actinobacillus</taxon>
    </lineage>
</organism>
<protein>
    <recommendedName>
        <fullName evidence="1">Exodeoxyribonuclease 7 small subunit</fullName>
        <ecNumber evidence="1">3.1.11.6</ecNumber>
    </recommendedName>
    <alternativeName>
        <fullName evidence="1">Exodeoxyribonuclease VII small subunit</fullName>
        <shortName evidence="1">Exonuclease VII small subunit</shortName>
    </alternativeName>
</protein>
<proteinExistence type="inferred from homology"/>
<reference key="1">
    <citation type="submission" date="2008-06" db="EMBL/GenBank/DDBJ databases">
        <title>Genome and proteome analysis of A. pleuropneumoniae serotype 7.</title>
        <authorList>
            <person name="Linke B."/>
            <person name="Buettner F."/>
            <person name="Martinez-Arias R."/>
            <person name="Goesmann A."/>
            <person name="Baltes N."/>
            <person name="Tegetmeyer H."/>
            <person name="Singh M."/>
            <person name="Gerlach G.F."/>
        </authorList>
    </citation>
    <scope>NUCLEOTIDE SEQUENCE [LARGE SCALE GENOMIC DNA]</scope>
    <source>
        <strain>AP76</strain>
    </source>
</reference>
<dbReference type="EC" id="3.1.11.6" evidence="1"/>
<dbReference type="EMBL" id="CP001091">
    <property type="protein sequence ID" value="ACE61517.1"/>
    <property type="molecule type" value="Genomic_DNA"/>
</dbReference>
<dbReference type="RefSeq" id="WP_005597261.1">
    <property type="nucleotide sequence ID" value="NC_010939.1"/>
</dbReference>
<dbReference type="SMR" id="B3H1E5"/>
<dbReference type="GeneID" id="48598991"/>
<dbReference type="KEGG" id="apa:APP7_0865"/>
<dbReference type="HOGENOM" id="CLU_145918_3_3_6"/>
<dbReference type="Proteomes" id="UP000001226">
    <property type="component" value="Chromosome"/>
</dbReference>
<dbReference type="GO" id="GO:0005829">
    <property type="term" value="C:cytosol"/>
    <property type="evidence" value="ECO:0007669"/>
    <property type="project" value="TreeGrafter"/>
</dbReference>
<dbReference type="GO" id="GO:0009318">
    <property type="term" value="C:exodeoxyribonuclease VII complex"/>
    <property type="evidence" value="ECO:0007669"/>
    <property type="project" value="InterPro"/>
</dbReference>
<dbReference type="GO" id="GO:0008855">
    <property type="term" value="F:exodeoxyribonuclease VII activity"/>
    <property type="evidence" value="ECO:0007669"/>
    <property type="project" value="UniProtKB-UniRule"/>
</dbReference>
<dbReference type="GO" id="GO:0006308">
    <property type="term" value="P:DNA catabolic process"/>
    <property type="evidence" value="ECO:0007669"/>
    <property type="project" value="UniProtKB-UniRule"/>
</dbReference>
<dbReference type="Gene3D" id="1.10.287.1040">
    <property type="entry name" value="Exonuclease VII, small subunit"/>
    <property type="match status" value="1"/>
</dbReference>
<dbReference type="HAMAP" id="MF_00337">
    <property type="entry name" value="Exonuc_7_S"/>
    <property type="match status" value="1"/>
</dbReference>
<dbReference type="InterPro" id="IPR003761">
    <property type="entry name" value="Exonuc_VII_S"/>
</dbReference>
<dbReference type="InterPro" id="IPR037004">
    <property type="entry name" value="Exonuc_VII_ssu_sf"/>
</dbReference>
<dbReference type="NCBIfam" id="NF002137">
    <property type="entry name" value="PRK00977.1-1"/>
    <property type="match status" value="1"/>
</dbReference>
<dbReference type="NCBIfam" id="NF002140">
    <property type="entry name" value="PRK00977.1-4"/>
    <property type="match status" value="1"/>
</dbReference>
<dbReference type="NCBIfam" id="TIGR01280">
    <property type="entry name" value="xseB"/>
    <property type="match status" value="1"/>
</dbReference>
<dbReference type="PANTHER" id="PTHR34137">
    <property type="entry name" value="EXODEOXYRIBONUCLEASE 7 SMALL SUBUNIT"/>
    <property type="match status" value="1"/>
</dbReference>
<dbReference type="PANTHER" id="PTHR34137:SF1">
    <property type="entry name" value="EXODEOXYRIBONUCLEASE 7 SMALL SUBUNIT"/>
    <property type="match status" value="1"/>
</dbReference>
<dbReference type="Pfam" id="PF02609">
    <property type="entry name" value="Exonuc_VII_S"/>
    <property type="match status" value="1"/>
</dbReference>
<dbReference type="PIRSF" id="PIRSF006488">
    <property type="entry name" value="Exonuc_VII_S"/>
    <property type="match status" value="1"/>
</dbReference>
<dbReference type="SUPFAM" id="SSF116842">
    <property type="entry name" value="XseB-like"/>
    <property type="match status" value="1"/>
</dbReference>
<sequence length="74" mass="8499">MAKKPTQDFESTLKELEAIVSHLETGELPLEEALNEFETAVKLVQQGQERLQKAEQRIQILLNKNDQAELSDYE</sequence>
<gene>
    <name evidence="1" type="primary">xseB</name>
    <name type="ordered locus">APP7_0865</name>
</gene>
<evidence type="ECO:0000255" key="1">
    <source>
        <dbReference type="HAMAP-Rule" id="MF_00337"/>
    </source>
</evidence>
<feature type="chain" id="PRO_1000119891" description="Exodeoxyribonuclease 7 small subunit">
    <location>
        <begin position="1"/>
        <end position="74"/>
    </location>
</feature>
<comment type="function">
    <text evidence="1">Bidirectionally degrades single-stranded DNA into large acid-insoluble oligonucleotides, which are then degraded further into small acid-soluble oligonucleotides.</text>
</comment>
<comment type="catalytic activity">
    <reaction evidence="1">
        <text>Exonucleolytic cleavage in either 5'- to 3'- or 3'- to 5'-direction to yield nucleoside 5'-phosphates.</text>
        <dbReference type="EC" id="3.1.11.6"/>
    </reaction>
</comment>
<comment type="subunit">
    <text evidence="1">Heterooligomer composed of large and small subunits.</text>
</comment>
<comment type="subcellular location">
    <subcellularLocation>
        <location evidence="1">Cytoplasm</location>
    </subcellularLocation>
</comment>
<comment type="similarity">
    <text evidence="1">Belongs to the XseB family.</text>
</comment>
<name>EX7S_ACTP7</name>
<keyword id="KW-0963">Cytoplasm</keyword>
<keyword id="KW-0269">Exonuclease</keyword>
<keyword id="KW-0378">Hydrolase</keyword>
<keyword id="KW-0540">Nuclease</keyword>